<reference key="1">
    <citation type="journal article" date="2005" name="Nat. Genet.">
        <title>The complete genome sequence of Francisella tularensis, the causative agent of tularemia.</title>
        <authorList>
            <person name="Larsson P."/>
            <person name="Oyston P.C.F."/>
            <person name="Chain P."/>
            <person name="Chu M.C."/>
            <person name="Duffield M."/>
            <person name="Fuxelius H.-H."/>
            <person name="Garcia E."/>
            <person name="Haelltorp G."/>
            <person name="Johansson D."/>
            <person name="Isherwood K.E."/>
            <person name="Karp P.D."/>
            <person name="Larsson E."/>
            <person name="Liu Y."/>
            <person name="Michell S."/>
            <person name="Prior J."/>
            <person name="Prior R."/>
            <person name="Malfatti S."/>
            <person name="Sjoestedt A."/>
            <person name="Svensson K."/>
            <person name="Thompson N."/>
            <person name="Vergez L."/>
            <person name="Wagg J.K."/>
            <person name="Wren B.W."/>
            <person name="Lindler L.E."/>
            <person name="Andersson S.G.E."/>
            <person name="Forsman M."/>
            <person name="Titball R.W."/>
        </authorList>
    </citation>
    <scope>NUCLEOTIDE SEQUENCE [LARGE SCALE GENOMIC DNA]</scope>
    <source>
        <strain>SCHU S4 / Schu 4</strain>
    </source>
</reference>
<sequence length="294" mass="31814">MNILENINTEKRNPRSLNLDSMSIAEAVSLMIDEEYGVIEALKEQHRNITEVILATSYSLRNGGRIIYIGAGTSGRLGILDAVECPPTFSVDYNTIVGLIAGGEKAFIQAQEGAEDDANFGKEDLQSINLTAKDIVIGIAASGRTPYVIGALEYANSIGATTVAISCTKQAKISKYAKYSIEAVPGPEVLTGSTRLKAGTTQKLILNMISTLSMVSVGKVYQNLMVDVKPTNQKLIERSKNIVCEATGVDYTTAEKFYLKANKSVKVAIVMILNNCDYEKALAILKNNNNFIKS</sequence>
<name>MURQ_FRATT</name>
<keyword id="KW-0119">Carbohydrate metabolism</keyword>
<keyword id="KW-0456">Lyase</keyword>
<keyword id="KW-1185">Reference proteome</keyword>
<feature type="chain" id="PRO_0000249626" description="N-acetylmuramic acid 6-phosphate etherase">
    <location>
        <begin position="1"/>
        <end position="294"/>
    </location>
</feature>
<feature type="domain" description="SIS" evidence="1">
    <location>
        <begin position="56"/>
        <end position="219"/>
    </location>
</feature>
<feature type="active site" description="Proton donor" evidence="1">
    <location>
        <position position="84"/>
    </location>
</feature>
<feature type="active site" evidence="1">
    <location>
        <position position="115"/>
    </location>
</feature>
<evidence type="ECO:0000255" key="1">
    <source>
        <dbReference type="HAMAP-Rule" id="MF_00068"/>
    </source>
</evidence>
<organism>
    <name type="scientific">Francisella tularensis subsp. tularensis (strain SCHU S4 / Schu 4)</name>
    <dbReference type="NCBI Taxonomy" id="177416"/>
    <lineage>
        <taxon>Bacteria</taxon>
        <taxon>Pseudomonadati</taxon>
        <taxon>Pseudomonadota</taxon>
        <taxon>Gammaproteobacteria</taxon>
        <taxon>Thiotrichales</taxon>
        <taxon>Francisellaceae</taxon>
        <taxon>Francisella</taxon>
    </lineage>
</organism>
<dbReference type="EC" id="4.2.1.126" evidence="1"/>
<dbReference type="EMBL" id="AJ749949">
    <property type="protein sequence ID" value="CAG46127.1"/>
    <property type="molecule type" value="Genomic_DNA"/>
</dbReference>
<dbReference type="RefSeq" id="WP_003022359.1">
    <property type="nucleotide sequence ID" value="NC_006570.2"/>
</dbReference>
<dbReference type="RefSeq" id="YP_170429.1">
    <property type="nucleotide sequence ID" value="NC_006570.2"/>
</dbReference>
<dbReference type="SMR" id="Q5NEW3"/>
<dbReference type="STRING" id="177416.FTT_1494c"/>
<dbReference type="DNASU" id="3192311"/>
<dbReference type="EnsemblBacteria" id="CAG46127">
    <property type="protein sequence ID" value="CAG46127"/>
    <property type="gene ID" value="FTT_1494c"/>
</dbReference>
<dbReference type="KEGG" id="ftu:FTT_1494c"/>
<dbReference type="eggNOG" id="COG2103">
    <property type="taxonomic scope" value="Bacteria"/>
</dbReference>
<dbReference type="OrthoDB" id="9813395at2"/>
<dbReference type="UniPathway" id="UPA00342"/>
<dbReference type="UniPathway" id="UPA00343"/>
<dbReference type="UniPathway" id="UPA00544"/>
<dbReference type="Proteomes" id="UP000001174">
    <property type="component" value="Chromosome"/>
</dbReference>
<dbReference type="GO" id="GO:0097367">
    <property type="term" value="F:carbohydrate derivative binding"/>
    <property type="evidence" value="ECO:0007669"/>
    <property type="project" value="InterPro"/>
</dbReference>
<dbReference type="GO" id="GO:0016835">
    <property type="term" value="F:carbon-oxygen lyase activity"/>
    <property type="evidence" value="ECO:0007669"/>
    <property type="project" value="UniProtKB-UniRule"/>
</dbReference>
<dbReference type="GO" id="GO:0016803">
    <property type="term" value="F:ether hydrolase activity"/>
    <property type="evidence" value="ECO:0007669"/>
    <property type="project" value="TreeGrafter"/>
</dbReference>
<dbReference type="GO" id="GO:0097175">
    <property type="term" value="P:1,6-anhydro-N-acetyl-beta-muramic acid catabolic process"/>
    <property type="evidence" value="ECO:0007669"/>
    <property type="project" value="UniProtKB-UniRule"/>
</dbReference>
<dbReference type="GO" id="GO:0046348">
    <property type="term" value="P:amino sugar catabolic process"/>
    <property type="evidence" value="ECO:0007669"/>
    <property type="project" value="InterPro"/>
</dbReference>
<dbReference type="GO" id="GO:0097173">
    <property type="term" value="P:N-acetylmuramic acid catabolic process"/>
    <property type="evidence" value="ECO:0007669"/>
    <property type="project" value="UniProtKB-UniPathway"/>
</dbReference>
<dbReference type="GO" id="GO:0009254">
    <property type="term" value="P:peptidoglycan turnover"/>
    <property type="evidence" value="ECO:0007669"/>
    <property type="project" value="UniProtKB-UniRule"/>
</dbReference>
<dbReference type="CDD" id="cd05007">
    <property type="entry name" value="SIS_Etherase"/>
    <property type="match status" value="1"/>
</dbReference>
<dbReference type="FunFam" id="1.10.8.1080:FF:000001">
    <property type="entry name" value="N-acetylmuramic acid 6-phosphate etherase"/>
    <property type="match status" value="1"/>
</dbReference>
<dbReference type="FunFam" id="3.40.50.10490:FF:000014">
    <property type="entry name" value="N-acetylmuramic acid 6-phosphate etherase"/>
    <property type="match status" value="1"/>
</dbReference>
<dbReference type="Gene3D" id="1.10.8.1080">
    <property type="match status" value="1"/>
</dbReference>
<dbReference type="Gene3D" id="3.40.50.10490">
    <property type="entry name" value="Glucose-6-phosphate isomerase like protein, domain 1"/>
    <property type="match status" value="1"/>
</dbReference>
<dbReference type="HAMAP" id="MF_00068">
    <property type="entry name" value="MurQ"/>
    <property type="match status" value="1"/>
</dbReference>
<dbReference type="InterPro" id="IPR005488">
    <property type="entry name" value="Etherase_MurQ"/>
</dbReference>
<dbReference type="InterPro" id="IPR005486">
    <property type="entry name" value="Glucokinase_regulatory_CS"/>
</dbReference>
<dbReference type="InterPro" id="IPR040190">
    <property type="entry name" value="MURQ/GCKR"/>
</dbReference>
<dbReference type="InterPro" id="IPR001347">
    <property type="entry name" value="SIS_dom"/>
</dbReference>
<dbReference type="InterPro" id="IPR046348">
    <property type="entry name" value="SIS_dom_sf"/>
</dbReference>
<dbReference type="NCBIfam" id="TIGR00274">
    <property type="entry name" value="N-acetylmuramic acid 6-phosphate etherase"/>
    <property type="match status" value="1"/>
</dbReference>
<dbReference type="NCBIfam" id="NF003915">
    <property type="entry name" value="PRK05441.1"/>
    <property type="match status" value="1"/>
</dbReference>
<dbReference type="NCBIfam" id="NF009222">
    <property type="entry name" value="PRK12570.1"/>
    <property type="match status" value="1"/>
</dbReference>
<dbReference type="PANTHER" id="PTHR10088">
    <property type="entry name" value="GLUCOKINASE REGULATORY PROTEIN"/>
    <property type="match status" value="1"/>
</dbReference>
<dbReference type="PANTHER" id="PTHR10088:SF4">
    <property type="entry name" value="GLUCOKINASE REGULATORY PROTEIN"/>
    <property type="match status" value="1"/>
</dbReference>
<dbReference type="Pfam" id="PF22645">
    <property type="entry name" value="GKRP_SIS_N"/>
    <property type="match status" value="1"/>
</dbReference>
<dbReference type="SUPFAM" id="SSF53697">
    <property type="entry name" value="SIS domain"/>
    <property type="match status" value="1"/>
</dbReference>
<dbReference type="PROSITE" id="PS01272">
    <property type="entry name" value="GCKR"/>
    <property type="match status" value="1"/>
</dbReference>
<dbReference type="PROSITE" id="PS51464">
    <property type="entry name" value="SIS"/>
    <property type="match status" value="1"/>
</dbReference>
<comment type="function">
    <text evidence="1">Specifically catalyzes the cleavage of the D-lactyl ether substituent of MurNAc 6-phosphate, producing GlcNAc 6-phosphate and D-lactate. Together with AnmK, is also required for the utilization of anhydro-N-acetylmuramic acid (anhMurNAc) either imported from the medium or derived from its own cell wall murein, and thus plays a role in cell wall recycling.</text>
</comment>
<comment type="catalytic activity">
    <reaction evidence="1">
        <text>N-acetyl-D-muramate 6-phosphate + H2O = N-acetyl-D-glucosamine 6-phosphate + (R)-lactate</text>
        <dbReference type="Rhea" id="RHEA:26410"/>
        <dbReference type="ChEBI" id="CHEBI:15377"/>
        <dbReference type="ChEBI" id="CHEBI:16004"/>
        <dbReference type="ChEBI" id="CHEBI:57513"/>
        <dbReference type="ChEBI" id="CHEBI:58722"/>
        <dbReference type="EC" id="4.2.1.126"/>
    </reaction>
</comment>
<comment type="pathway">
    <text evidence="1">Amino-sugar metabolism; 1,6-anhydro-N-acetylmuramate degradation.</text>
</comment>
<comment type="pathway">
    <text evidence="1">Amino-sugar metabolism; N-acetylmuramate degradation.</text>
</comment>
<comment type="pathway">
    <text evidence="1">Cell wall biogenesis; peptidoglycan recycling.</text>
</comment>
<comment type="subunit">
    <text evidence="1">Homodimer.</text>
</comment>
<comment type="miscellaneous">
    <text evidence="1">A lyase-type mechanism (elimination/hydration) is suggested for the cleavage of the lactyl ether bond of MurNAc 6-phosphate, with the formation of an alpha,beta-unsaturated aldehyde intermediate with (E)-stereochemistry, followed by the syn addition of water to give product.</text>
</comment>
<comment type="similarity">
    <text evidence="1">Belongs to the GCKR-like family. MurNAc-6-P etherase subfamily.</text>
</comment>
<accession>Q5NEW3</accession>
<protein>
    <recommendedName>
        <fullName evidence="1">N-acetylmuramic acid 6-phosphate etherase</fullName>
        <shortName evidence="1">MurNAc-6-P etherase</shortName>
        <ecNumber evidence="1">4.2.1.126</ecNumber>
    </recommendedName>
    <alternativeName>
        <fullName evidence="1">N-acetylmuramic acid 6-phosphate hydrolase</fullName>
    </alternativeName>
    <alternativeName>
        <fullName evidence="1">N-acetylmuramic acid 6-phosphate lyase</fullName>
    </alternativeName>
</protein>
<proteinExistence type="inferred from homology"/>
<gene>
    <name evidence="1" type="primary">murQ</name>
    <name type="ordered locus">FTT_1494c</name>
</gene>